<name>GRPE_YERPP</name>
<proteinExistence type="inferred from homology"/>
<sequence length="192" mass="21545">MSSKEQKTPNEQVSEEMENTAEQQVEATQETGECVDPRVAELEVQLSDALQRERESLLRAKAEVENIRRRTELDVEKAHKFALERFSSELLPVIDNLERALDTADKTNTELTSMIEGVELTLKSLLDAVGKFGIEVVGETHVPFNPEVHQAMTMLESADHEPNHVMMVMQKGYTLNGRLLRPAMVAVSKAKS</sequence>
<gene>
    <name evidence="1" type="primary">grpE</name>
    <name type="ordered locus">YPDSF_2590</name>
</gene>
<keyword id="KW-0143">Chaperone</keyword>
<keyword id="KW-0963">Cytoplasm</keyword>
<keyword id="KW-0346">Stress response</keyword>
<accession>A4TNU6</accession>
<organism>
    <name type="scientific">Yersinia pestis (strain Pestoides F)</name>
    <dbReference type="NCBI Taxonomy" id="386656"/>
    <lineage>
        <taxon>Bacteria</taxon>
        <taxon>Pseudomonadati</taxon>
        <taxon>Pseudomonadota</taxon>
        <taxon>Gammaproteobacteria</taxon>
        <taxon>Enterobacterales</taxon>
        <taxon>Yersiniaceae</taxon>
        <taxon>Yersinia</taxon>
    </lineage>
</organism>
<feature type="chain" id="PRO_1000053667" description="Protein GrpE">
    <location>
        <begin position="1"/>
        <end position="192"/>
    </location>
</feature>
<feature type="region of interest" description="Disordered" evidence="2">
    <location>
        <begin position="1"/>
        <end position="34"/>
    </location>
</feature>
<feature type="compositionally biased region" description="Polar residues" evidence="2">
    <location>
        <begin position="20"/>
        <end position="31"/>
    </location>
</feature>
<protein>
    <recommendedName>
        <fullName evidence="1">Protein GrpE</fullName>
    </recommendedName>
    <alternativeName>
        <fullName evidence="1">HSP-70 cofactor</fullName>
    </alternativeName>
</protein>
<comment type="function">
    <text evidence="1">Participates actively in the response to hyperosmotic and heat shock by preventing the aggregation of stress-denatured proteins, in association with DnaK and GrpE. It is the nucleotide exchange factor for DnaK and may function as a thermosensor. Unfolded proteins bind initially to DnaJ; upon interaction with the DnaJ-bound protein, DnaK hydrolyzes its bound ATP, resulting in the formation of a stable complex. GrpE releases ADP from DnaK; ATP binding to DnaK triggers the release of the substrate protein, thus completing the reaction cycle. Several rounds of ATP-dependent interactions between DnaJ, DnaK and GrpE are required for fully efficient folding.</text>
</comment>
<comment type="subunit">
    <text evidence="1">Homodimer.</text>
</comment>
<comment type="subcellular location">
    <subcellularLocation>
        <location evidence="1">Cytoplasm</location>
    </subcellularLocation>
</comment>
<comment type="similarity">
    <text evidence="1">Belongs to the GrpE family.</text>
</comment>
<dbReference type="EMBL" id="CP000668">
    <property type="protein sequence ID" value="ABP40958.1"/>
    <property type="molecule type" value="Genomic_DNA"/>
</dbReference>
<dbReference type="RefSeq" id="WP_002224622.1">
    <property type="nucleotide sequence ID" value="NZ_CP009715.1"/>
</dbReference>
<dbReference type="SMR" id="A4TNU6"/>
<dbReference type="GeneID" id="49786790"/>
<dbReference type="KEGG" id="ypp:YPDSF_2590"/>
<dbReference type="PATRIC" id="fig|386656.14.peg.4111"/>
<dbReference type="GO" id="GO:0005829">
    <property type="term" value="C:cytosol"/>
    <property type="evidence" value="ECO:0007669"/>
    <property type="project" value="TreeGrafter"/>
</dbReference>
<dbReference type="GO" id="GO:0000774">
    <property type="term" value="F:adenyl-nucleotide exchange factor activity"/>
    <property type="evidence" value="ECO:0007669"/>
    <property type="project" value="InterPro"/>
</dbReference>
<dbReference type="GO" id="GO:0042803">
    <property type="term" value="F:protein homodimerization activity"/>
    <property type="evidence" value="ECO:0007669"/>
    <property type="project" value="InterPro"/>
</dbReference>
<dbReference type="GO" id="GO:0051087">
    <property type="term" value="F:protein-folding chaperone binding"/>
    <property type="evidence" value="ECO:0007669"/>
    <property type="project" value="InterPro"/>
</dbReference>
<dbReference type="GO" id="GO:0051082">
    <property type="term" value="F:unfolded protein binding"/>
    <property type="evidence" value="ECO:0007669"/>
    <property type="project" value="TreeGrafter"/>
</dbReference>
<dbReference type="GO" id="GO:0006457">
    <property type="term" value="P:protein folding"/>
    <property type="evidence" value="ECO:0007669"/>
    <property type="project" value="InterPro"/>
</dbReference>
<dbReference type="CDD" id="cd00446">
    <property type="entry name" value="GrpE"/>
    <property type="match status" value="1"/>
</dbReference>
<dbReference type="FunFam" id="2.30.22.10:FF:000001">
    <property type="entry name" value="Protein GrpE"/>
    <property type="match status" value="1"/>
</dbReference>
<dbReference type="FunFam" id="3.90.20.20:FF:000001">
    <property type="entry name" value="Protein GrpE"/>
    <property type="match status" value="1"/>
</dbReference>
<dbReference type="Gene3D" id="3.90.20.20">
    <property type="match status" value="1"/>
</dbReference>
<dbReference type="Gene3D" id="2.30.22.10">
    <property type="entry name" value="Head domain of nucleotide exchange factor GrpE"/>
    <property type="match status" value="1"/>
</dbReference>
<dbReference type="HAMAP" id="MF_01151">
    <property type="entry name" value="GrpE"/>
    <property type="match status" value="1"/>
</dbReference>
<dbReference type="InterPro" id="IPR000740">
    <property type="entry name" value="GrpE"/>
</dbReference>
<dbReference type="InterPro" id="IPR013805">
    <property type="entry name" value="GrpE_coiled_coil"/>
</dbReference>
<dbReference type="InterPro" id="IPR009012">
    <property type="entry name" value="GrpE_head"/>
</dbReference>
<dbReference type="NCBIfam" id="NF010737">
    <property type="entry name" value="PRK14139.1"/>
    <property type="match status" value="1"/>
</dbReference>
<dbReference type="NCBIfam" id="NF010738">
    <property type="entry name" value="PRK14140.1"/>
    <property type="match status" value="1"/>
</dbReference>
<dbReference type="NCBIfam" id="NF010748">
    <property type="entry name" value="PRK14150.1"/>
    <property type="match status" value="1"/>
</dbReference>
<dbReference type="PANTHER" id="PTHR21237">
    <property type="entry name" value="GRPE PROTEIN"/>
    <property type="match status" value="1"/>
</dbReference>
<dbReference type="PANTHER" id="PTHR21237:SF23">
    <property type="entry name" value="GRPE PROTEIN HOMOLOG, MITOCHONDRIAL"/>
    <property type="match status" value="1"/>
</dbReference>
<dbReference type="Pfam" id="PF01025">
    <property type="entry name" value="GrpE"/>
    <property type="match status" value="1"/>
</dbReference>
<dbReference type="PRINTS" id="PR00773">
    <property type="entry name" value="GRPEPROTEIN"/>
</dbReference>
<dbReference type="SUPFAM" id="SSF58014">
    <property type="entry name" value="Coiled-coil domain of nucleotide exchange factor GrpE"/>
    <property type="match status" value="1"/>
</dbReference>
<dbReference type="SUPFAM" id="SSF51064">
    <property type="entry name" value="Head domain of nucleotide exchange factor GrpE"/>
    <property type="match status" value="1"/>
</dbReference>
<dbReference type="PROSITE" id="PS01071">
    <property type="entry name" value="GRPE"/>
    <property type="match status" value="1"/>
</dbReference>
<evidence type="ECO:0000255" key="1">
    <source>
        <dbReference type="HAMAP-Rule" id="MF_01151"/>
    </source>
</evidence>
<evidence type="ECO:0000256" key="2">
    <source>
        <dbReference type="SAM" id="MobiDB-lite"/>
    </source>
</evidence>
<reference key="1">
    <citation type="submission" date="2007-02" db="EMBL/GenBank/DDBJ databases">
        <title>Complete sequence of chromosome of Yersinia pestis Pestoides F.</title>
        <authorList>
            <consortium name="US DOE Joint Genome Institute"/>
            <person name="Copeland A."/>
            <person name="Lucas S."/>
            <person name="Lapidus A."/>
            <person name="Barry K."/>
            <person name="Detter J.C."/>
            <person name="Glavina del Rio T."/>
            <person name="Hammon N."/>
            <person name="Israni S."/>
            <person name="Dalin E."/>
            <person name="Tice H."/>
            <person name="Pitluck S."/>
            <person name="Di Bartolo G."/>
            <person name="Chain P."/>
            <person name="Malfatti S."/>
            <person name="Shin M."/>
            <person name="Vergez L."/>
            <person name="Schmutz J."/>
            <person name="Larimer F."/>
            <person name="Land M."/>
            <person name="Hauser L."/>
            <person name="Worsham P."/>
            <person name="Chu M."/>
            <person name="Bearden S."/>
            <person name="Garcia E."/>
            <person name="Richardson P."/>
        </authorList>
    </citation>
    <scope>NUCLEOTIDE SEQUENCE [LARGE SCALE GENOMIC DNA]</scope>
    <source>
        <strain>Pestoides F</strain>
    </source>
</reference>